<gene>
    <name evidence="1" type="primary">rpoA</name>
</gene>
<name>RPOA_CHAGL</name>
<proteinExistence type="inferred from homology"/>
<reference key="1">
    <citation type="journal article" date="2002" name="Proc. Natl. Acad. Sci. U.S.A.">
        <title>The chloroplast and mitochondrial genome sequences of the charophyte Chaetosphaeridium globosum: insights into the timing of the events that restructured organelle DNAs within the green algal lineage that led to land plants.</title>
        <authorList>
            <person name="Turmel M."/>
            <person name="Otis C."/>
            <person name="Lemieux C."/>
        </authorList>
    </citation>
    <scope>NUCLEOTIDE SEQUENCE [LARGE SCALE GENOMIC DNA]</scope>
    <source>
        <strain>M1311</strain>
    </source>
</reference>
<dbReference type="EC" id="2.7.7.6" evidence="1"/>
<dbReference type="EMBL" id="AF494278">
    <property type="protein sequence ID" value="AAM96565.1"/>
    <property type="molecule type" value="Genomic_DNA"/>
</dbReference>
<dbReference type="RefSeq" id="NP_683832.1">
    <property type="nucleotide sequence ID" value="NC_004115.1"/>
</dbReference>
<dbReference type="SMR" id="Q8M9V7"/>
<dbReference type="GeneID" id="860721"/>
<dbReference type="GO" id="GO:0009507">
    <property type="term" value="C:chloroplast"/>
    <property type="evidence" value="ECO:0007669"/>
    <property type="project" value="UniProtKB-SubCell"/>
</dbReference>
<dbReference type="GO" id="GO:0000428">
    <property type="term" value="C:DNA-directed RNA polymerase complex"/>
    <property type="evidence" value="ECO:0007669"/>
    <property type="project" value="UniProtKB-KW"/>
</dbReference>
<dbReference type="GO" id="GO:0005739">
    <property type="term" value="C:mitochondrion"/>
    <property type="evidence" value="ECO:0007669"/>
    <property type="project" value="GOC"/>
</dbReference>
<dbReference type="GO" id="GO:0003677">
    <property type="term" value="F:DNA binding"/>
    <property type="evidence" value="ECO:0007669"/>
    <property type="project" value="UniProtKB-UniRule"/>
</dbReference>
<dbReference type="GO" id="GO:0003899">
    <property type="term" value="F:DNA-directed RNA polymerase activity"/>
    <property type="evidence" value="ECO:0007669"/>
    <property type="project" value="UniProtKB-UniRule"/>
</dbReference>
<dbReference type="GO" id="GO:0046983">
    <property type="term" value="F:protein dimerization activity"/>
    <property type="evidence" value="ECO:0007669"/>
    <property type="project" value="InterPro"/>
</dbReference>
<dbReference type="GO" id="GO:0006351">
    <property type="term" value="P:DNA-templated transcription"/>
    <property type="evidence" value="ECO:0007669"/>
    <property type="project" value="UniProtKB-UniRule"/>
</dbReference>
<dbReference type="CDD" id="cd06928">
    <property type="entry name" value="RNAP_alpha_NTD"/>
    <property type="match status" value="1"/>
</dbReference>
<dbReference type="FunFam" id="2.170.120.12:FF:000001">
    <property type="entry name" value="DNA-directed RNA polymerase subunit alpha"/>
    <property type="match status" value="1"/>
</dbReference>
<dbReference type="Gene3D" id="1.10.150.20">
    <property type="entry name" value="5' to 3' exonuclease, C-terminal subdomain"/>
    <property type="match status" value="1"/>
</dbReference>
<dbReference type="Gene3D" id="2.170.120.12">
    <property type="entry name" value="DNA-directed RNA polymerase, insert domain"/>
    <property type="match status" value="1"/>
</dbReference>
<dbReference type="Gene3D" id="3.30.1360.10">
    <property type="entry name" value="RNA polymerase, RBP11-like subunit"/>
    <property type="match status" value="1"/>
</dbReference>
<dbReference type="HAMAP" id="MF_00059">
    <property type="entry name" value="RNApol_bact_RpoA"/>
    <property type="match status" value="1"/>
</dbReference>
<dbReference type="InterPro" id="IPR011262">
    <property type="entry name" value="DNA-dir_RNA_pol_insert"/>
</dbReference>
<dbReference type="InterPro" id="IPR011263">
    <property type="entry name" value="DNA-dir_RNA_pol_RpoA/D/Rpb3"/>
</dbReference>
<dbReference type="InterPro" id="IPR011773">
    <property type="entry name" value="DNA-dir_RpoA"/>
</dbReference>
<dbReference type="InterPro" id="IPR036603">
    <property type="entry name" value="RBP11-like"/>
</dbReference>
<dbReference type="InterPro" id="IPR011260">
    <property type="entry name" value="RNAP_asu_C"/>
</dbReference>
<dbReference type="InterPro" id="IPR036643">
    <property type="entry name" value="RNApol_insert_sf"/>
</dbReference>
<dbReference type="NCBIfam" id="TIGR02027">
    <property type="entry name" value="rpoA"/>
    <property type="match status" value="1"/>
</dbReference>
<dbReference type="Pfam" id="PF01000">
    <property type="entry name" value="RNA_pol_A_bac"/>
    <property type="match status" value="1"/>
</dbReference>
<dbReference type="Pfam" id="PF03118">
    <property type="entry name" value="RNA_pol_A_CTD"/>
    <property type="match status" value="1"/>
</dbReference>
<dbReference type="Pfam" id="PF01193">
    <property type="entry name" value="RNA_pol_L"/>
    <property type="match status" value="1"/>
</dbReference>
<dbReference type="SMART" id="SM00662">
    <property type="entry name" value="RPOLD"/>
    <property type="match status" value="1"/>
</dbReference>
<dbReference type="SUPFAM" id="SSF47789">
    <property type="entry name" value="C-terminal domain of RNA polymerase alpha subunit"/>
    <property type="match status" value="1"/>
</dbReference>
<dbReference type="SUPFAM" id="SSF56553">
    <property type="entry name" value="Insert subdomain of RNA polymerase alpha subunit"/>
    <property type="match status" value="1"/>
</dbReference>
<dbReference type="SUPFAM" id="SSF55257">
    <property type="entry name" value="RBP11-like subunits of RNA polymerase"/>
    <property type="match status" value="1"/>
</dbReference>
<feature type="chain" id="PRO_0000175445" description="DNA-directed RNA polymerase subunit alpha">
    <location>
        <begin position="1"/>
        <end position="334"/>
    </location>
</feature>
<feature type="region of interest" description="Alpha N-terminal domain (alpha-NTD)" evidence="1">
    <location>
        <begin position="1"/>
        <end position="233"/>
    </location>
</feature>
<feature type="region of interest" description="Alpha C-terminal domain (alpha-CTD)" evidence="1">
    <location>
        <begin position="263"/>
        <end position="334"/>
    </location>
</feature>
<accession>Q8M9V7</accession>
<sequence length="334" mass="38117">MADQTISNVLNQPQWRCLESKIEKSTLHYGRFIISPLWKGQANTIGLALRRTLLSEVEGTCITSVKIKNAIHEYSSLSGVQESVHDILINLKKIILSSSFSGIFEGFLSVVGPKTVLASDLNLPSFIKIVNPDQYIATVNKPINFNLQIYIQKGKGYSLKNPISIKQGFFLVDPVFIPIRSVNYSIHSFEDEKATKEFLIVEVWTNGSIEPKEAIKEASYNLVNLFTPLVSQEYQQLKNQLFKEDEKNKELNFIETNSNAISDNENSYNLYNQIFLDQLELSSRAYNSLKKNNINTISDLLKYSYEDLLKIKNFGKKSADQVIEQLKKRFKIQL</sequence>
<protein>
    <recommendedName>
        <fullName evidence="1">DNA-directed RNA polymerase subunit alpha</fullName>
        <shortName evidence="1">PEP</shortName>
        <ecNumber evidence="1">2.7.7.6</ecNumber>
    </recommendedName>
    <alternativeName>
        <fullName evidence="1">Plastid-encoded RNA polymerase subunit alpha</fullName>
        <shortName evidence="1">RNA polymerase subunit alpha</shortName>
    </alternativeName>
</protein>
<evidence type="ECO:0000255" key="1">
    <source>
        <dbReference type="HAMAP-Rule" id="MF_00059"/>
    </source>
</evidence>
<comment type="function">
    <text evidence="1">DNA-dependent RNA polymerase catalyzes the transcription of DNA into RNA using the four ribonucleoside triphosphates as substrates.</text>
</comment>
<comment type="catalytic activity">
    <reaction evidence="1">
        <text>RNA(n) + a ribonucleoside 5'-triphosphate = RNA(n+1) + diphosphate</text>
        <dbReference type="Rhea" id="RHEA:21248"/>
        <dbReference type="Rhea" id="RHEA-COMP:14527"/>
        <dbReference type="Rhea" id="RHEA-COMP:17342"/>
        <dbReference type="ChEBI" id="CHEBI:33019"/>
        <dbReference type="ChEBI" id="CHEBI:61557"/>
        <dbReference type="ChEBI" id="CHEBI:140395"/>
        <dbReference type="EC" id="2.7.7.6"/>
    </reaction>
</comment>
<comment type="subunit">
    <text evidence="1">In plastids the minimal PEP RNA polymerase catalytic core is composed of four subunits: alpha, beta, beta', and beta''. When a (nuclear-encoded) sigma factor is associated with the core the holoenzyme is formed, which can initiate transcription.</text>
</comment>
<comment type="subcellular location">
    <subcellularLocation>
        <location>Plastid</location>
        <location>Chloroplast</location>
    </subcellularLocation>
</comment>
<comment type="domain">
    <text evidence="1">The N-terminal domain is essential for RNAP assembly and basal transcription, whereas the C-terminal domain is involved in interaction with transcriptional regulators and with upstream promoter elements.</text>
</comment>
<comment type="similarity">
    <text evidence="1">Belongs to the RNA polymerase alpha chain family.</text>
</comment>
<geneLocation type="chloroplast"/>
<keyword id="KW-0150">Chloroplast</keyword>
<keyword id="KW-0240">DNA-directed RNA polymerase</keyword>
<keyword id="KW-0548">Nucleotidyltransferase</keyword>
<keyword id="KW-0934">Plastid</keyword>
<keyword id="KW-0804">Transcription</keyword>
<keyword id="KW-0808">Transferase</keyword>
<organism>
    <name type="scientific">Chaetosphaeridium globosum</name>
    <name type="common">Charophycean green alga</name>
    <name type="synonym">Herposteiron globosum</name>
    <dbReference type="NCBI Taxonomy" id="96477"/>
    <lineage>
        <taxon>Eukaryota</taxon>
        <taxon>Viridiplantae</taxon>
        <taxon>Streptophyta</taxon>
        <taxon>Coleochaetophyceae</taxon>
        <taxon>Coleochaetales</taxon>
        <taxon>Chaetosphaeridiaceae</taxon>
        <taxon>Chaetosphaeridium</taxon>
    </lineage>
</organism>